<gene>
    <name evidence="1" type="primary">atpA</name>
    <name type="ordered locus">Hbut_0784</name>
</gene>
<reference key="1">
    <citation type="journal article" date="2007" name="Archaea">
        <title>The genome of Hyperthermus butylicus: a sulfur-reducing, peptide fermenting, neutrophilic Crenarchaeote growing up to 108 degrees C.</title>
        <authorList>
            <person name="Bruegger K."/>
            <person name="Chen L."/>
            <person name="Stark M."/>
            <person name="Zibat A."/>
            <person name="Redder P."/>
            <person name="Ruepp A."/>
            <person name="Awayez M."/>
            <person name="She Q."/>
            <person name="Garrett R.A."/>
            <person name="Klenk H.-P."/>
        </authorList>
    </citation>
    <scope>NUCLEOTIDE SEQUENCE [LARGE SCALE GENOMIC DNA]</scope>
    <source>
        <strain>DSM 5456 / JCM 9403 / PLM1-5</strain>
    </source>
</reference>
<dbReference type="EC" id="7.1.2.2" evidence="1"/>
<dbReference type="EMBL" id="CP000493">
    <property type="protein sequence ID" value="ABM80637.1"/>
    <property type="molecule type" value="Genomic_DNA"/>
</dbReference>
<dbReference type="RefSeq" id="WP_011821955.1">
    <property type="nucleotide sequence ID" value="NC_008818.1"/>
</dbReference>
<dbReference type="SMR" id="A2BKX6"/>
<dbReference type="STRING" id="415426.Hbut_0784"/>
<dbReference type="EnsemblBacteria" id="ABM80637">
    <property type="protein sequence ID" value="ABM80637"/>
    <property type="gene ID" value="Hbut_0784"/>
</dbReference>
<dbReference type="GeneID" id="4782720"/>
<dbReference type="KEGG" id="hbu:Hbut_0784"/>
<dbReference type="eggNOG" id="arCOG00868">
    <property type="taxonomic scope" value="Archaea"/>
</dbReference>
<dbReference type="HOGENOM" id="CLU_008162_3_1_2"/>
<dbReference type="OrthoDB" id="115235at2157"/>
<dbReference type="Proteomes" id="UP000002593">
    <property type="component" value="Chromosome"/>
</dbReference>
<dbReference type="GO" id="GO:0005886">
    <property type="term" value="C:plasma membrane"/>
    <property type="evidence" value="ECO:0007669"/>
    <property type="project" value="UniProtKB-SubCell"/>
</dbReference>
<dbReference type="GO" id="GO:0033178">
    <property type="term" value="C:proton-transporting two-sector ATPase complex, catalytic domain"/>
    <property type="evidence" value="ECO:0007669"/>
    <property type="project" value="InterPro"/>
</dbReference>
<dbReference type="GO" id="GO:0005524">
    <property type="term" value="F:ATP binding"/>
    <property type="evidence" value="ECO:0007669"/>
    <property type="project" value="UniProtKB-UniRule"/>
</dbReference>
<dbReference type="GO" id="GO:0016887">
    <property type="term" value="F:ATP hydrolysis activity"/>
    <property type="evidence" value="ECO:0007669"/>
    <property type="project" value="InterPro"/>
</dbReference>
<dbReference type="GO" id="GO:0046933">
    <property type="term" value="F:proton-transporting ATP synthase activity, rotational mechanism"/>
    <property type="evidence" value="ECO:0007669"/>
    <property type="project" value="UniProtKB-UniRule"/>
</dbReference>
<dbReference type="GO" id="GO:0046961">
    <property type="term" value="F:proton-transporting ATPase activity, rotational mechanism"/>
    <property type="evidence" value="ECO:0007669"/>
    <property type="project" value="InterPro"/>
</dbReference>
<dbReference type="GO" id="GO:0042777">
    <property type="term" value="P:proton motive force-driven plasma membrane ATP synthesis"/>
    <property type="evidence" value="ECO:0007669"/>
    <property type="project" value="UniProtKB-UniRule"/>
</dbReference>
<dbReference type="CDD" id="cd18111">
    <property type="entry name" value="ATP-synt_V_A-type_alpha_C"/>
    <property type="match status" value="1"/>
</dbReference>
<dbReference type="CDD" id="cd18119">
    <property type="entry name" value="ATP-synt_V_A-type_alpha_N"/>
    <property type="match status" value="1"/>
</dbReference>
<dbReference type="CDD" id="cd01134">
    <property type="entry name" value="V_A-ATPase_A"/>
    <property type="match status" value="1"/>
</dbReference>
<dbReference type="FunFam" id="3.40.50.300:FF:000675">
    <property type="entry name" value="V-type ATP synthase alpha chain"/>
    <property type="match status" value="1"/>
</dbReference>
<dbReference type="FunFam" id="1.10.1140.10:FF:000002">
    <property type="entry name" value="V-type proton ATPase catalytic subunit A"/>
    <property type="match status" value="1"/>
</dbReference>
<dbReference type="FunFam" id="2.40.30.20:FF:000002">
    <property type="entry name" value="V-type proton ATPase catalytic subunit A"/>
    <property type="match status" value="1"/>
</dbReference>
<dbReference type="FunFam" id="2.40.50.100:FF:000008">
    <property type="entry name" value="V-type proton ATPase catalytic subunit A"/>
    <property type="match status" value="1"/>
</dbReference>
<dbReference type="Gene3D" id="2.40.30.20">
    <property type="match status" value="1"/>
</dbReference>
<dbReference type="Gene3D" id="2.40.50.100">
    <property type="match status" value="1"/>
</dbReference>
<dbReference type="Gene3D" id="1.10.1140.10">
    <property type="entry name" value="Bovine Mitochondrial F1-atpase, Atp Synthase Beta Chain, Chain D, domain 3"/>
    <property type="match status" value="1"/>
</dbReference>
<dbReference type="Gene3D" id="3.40.50.300">
    <property type="entry name" value="P-loop containing nucleotide triphosphate hydrolases"/>
    <property type="match status" value="1"/>
</dbReference>
<dbReference type="HAMAP" id="MF_00309">
    <property type="entry name" value="ATP_synth_A_arch"/>
    <property type="match status" value="1"/>
</dbReference>
<dbReference type="InterPro" id="IPR003593">
    <property type="entry name" value="AAA+_ATPase"/>
</dbReference>
<dbReference type="InterPro" id="IPR055190">
    <property type="entry name" value="ATP-synt_VA_C"/>
</dbReference>
<dbReference type="InterPro" id="IPR031686">
    <property type="entry name" value="ATP-synth_a_Xtn"/>
</dbReference>
<dbReference type="InterPro" id="IPR023366">
    <property type="entry name" value="ATP_synth_asu-like_sf"/>
</dbReference>
<dbReference type="InterPro" id="IPR005726">
    <property type="entry name" value="ATP_synth_asu_arc"/>
</dbReference>
<dbReference type="InterPro" id="IPR020003">
    <property type="entry name" value="ATPase_a/bsu_AS"/>
</dbReference>
<dbReference type="InterPro" id="IPR004100">
    <property type="entry name" value="ATPase_F1/V1/A1_a/bsu_N"/>
</dbReference>
<dbReference type="InterPro" id="IPR036121">
    <property type="entry name" value="ATPase_F1/V1/A1_a/bsu_N_sf"/>
</dbReference>
<dbReference type="InterPro" id="IPR000194">
    <property type="entry name" value="ATPase_F1/V1/A1_a/bsu_nucl-bd"/>
</dbReference>
<dbReference type="InterPro" id="IPR024034">
    <property type="entry name" value="ATPase_F1/V1_b/a_C"/>
</dbReference>
<dbReference type="InterPro" id="IPR027417">
    <property type="entry name" value="P-loop_NTPase"/>
</dbReference>
<dbReference type="InterPro" id="IPR022878">
    <property type="entry name" value="V-ATPase_asu"/>
</dbReference>
<dbReference type="NCBIfam" id="TIGR01043">
    <property type="entry name" value="ATP_syn_A_arch"/>
    <property type="match status" value="1"/>
</dbReference>
<dbReference type="NCBIfam" id="NF003220">
    <property type="entry name" value="PRK04192.1"/>
    <property type="match status" value="1"/>
</dbReference>
<dbReference type="PANTHER" id="PTHR43607:SF1">
    <property type="entry name" value="H(+)-TRANSPORTING TWO-SECTOR ATPASE"/>
    <property type="match status" value="1"/>
</dbReference>
<dbReference type="PANTHER" id="PTHR43607">
    <property type="entry name" value="V-TYPE PROTON ATPASE CATALYTIC SUBUNIT A"/>
    <property type="match status" value="1"/>
</dbReference>
<dbReference type="Pfam" id="PF00006">
    <property type="entry name" value="ATP-synt_ab"/>
    <property type="match status" value="1"/>
</dbReference>
<dbReference type="Pfam" id="PF02874">
    <property type="entry name" value="ATP-synt_ab_N"/>
    <property type="match status" value="1"/>
</dbReference>
<dbReference type="Pfam" id="PF16886">
    <property type="entry name" value="ATP-synt_ab_Xtn"/>
    <property type="match status" value="1"/>
</dbReference>
<dbReference type="Pfam" id="PF22919">
    <property type="entry name" value="ATP-synt_VA_C"/>
    <property type="match status" value="1"/>
</dbReference>
<dbReference type="SMART" id="SM00382">
    <property type="entry name" value="AAA"/>
    <property type="match status" value="1"/>
</dbReference>
<dbReference type="SUPFAM" id="SSF47917">
    <property type="entry name" value="C-terminal domain of alpha and beta subunits of F1 ATP synthase"/>
    <property type="match status" value="1"/>
</dbReference>
<dbReference type="SUPFAM" id="SSF50615">
    <property type="entry name" value="N-terminal domain of alpha and beta subunits of F1 ATP synthase"/>
    <property type="match status" value="1"/>
</dbReference>
<dbReference type="SUPFAM" id="SSF52540">
    <property type="entry name" value="P-loop containing nucleoside triphosphate hydrolases"/>
    <property type="match status" value="1"/>
</dbReference>
<dbReference type="PROSITE" id="PS00152">
    <property type="entry name" value="ATPASE_ALPHA_BETA"/>
    <property type="match status" value="1"/>
</dbReference>
<proteinExistence type="inferred from homology"/>
<protein>
    <recommendedName>
        <fullName evidence="1">A-type ATP synthase subunit A</fullName>
        <ecNumber evidence="1">7.1.2.2</ecNumber>
    </recommendedName>
</protein>
<name>AATA_HYPBU</name>
<feature type="chain" id="PRO_1000059343" description="A-type ATP synthase subunit A">
    <location>
        <begin position="1"/>
        <end position="601"/>
    </location>
</feature>
<feature type="binding site" evidence="1">
    <location>
        <begin position="236"/>
        <end position="243"/>
    </location>
    <ligand>
        <name>ATP</name>
        <dbReference type="ChEBI" id="CHEBI:30616"/>
    </ligand>
</feature>
<evidence type="ECO:0000255" key="1">
    <source>
        <dbReference type="HAMAP-Rule" id="MF_00309"/>
    </source>
</evidence>
<sequence>MPVKGRIIRVAGPLVVAEGMEGIQMYEMVEVGEERLIGEVNRVVGDKAYIQVYESTTGLKPGEPVYGTGSPLSVELGPGLIGRIYDGIQRPLDVIREVTKSIFVRRGVKVDALDRSRKWHFKPNTTLKPGDKVSGGDVLGEVQETSLITHKVLVPPDVHGRLKWLASEGDYTVEDVIAVVEADGKEIELKMYHRWPVRRARPIIEKLEPVEPLITGMRVIDTMFPMAKGGTGAIPGPFGSGKTVTLQSLAKWSAAKVVIYIGCGERGNEMTEVLETFPKLTDPWTGKPMMERTILIANTSNMPVAAREASIYTGITLAEYYRDMGYDVLLVADSTSRWAEALREIAGRLEEMPAEEGYPSYLASRLAEFYARAGRVKVPGRPERLGSVTIVGAVSPPGGDFTEPVTANTKRFIRVFWALDARLAYSRHYPAINWLVSYSAYVETVAKWWHENISPKWLEYRNEAYEILLREDELREIVRLVGTEGLSEKDKLILEIANIIKTGFLQQNAFDPVDAFATPQKQWKQLETIIDFYHAALEAIKRGVTVKEIREKLAPKIRELILARYNVPNDQLEKLDKLKQELLQALQELIEAKAGRASAAT</sequence>
<keyword id="KW-0066">ATP synthesis</keyword>
<keyword id="KW-0067">ATP-binding</keyword>
<keyword id="KW-1003">Cell membrane</keyword>
<keyword id="KW-0375">Hydrogen ion transport</keyword>
<keyword id="KW-0406">Ion transport</keyword>
<keyword id="KW-0472">Membrane</keyword>
<keyword id="KW-0547">Nucleotide-binding</keyword>
<keyword id="KW-1185">Reference proteome</keyword>
<keyword id="KW-1278">Translocase</keyword>
<keyword id="KW-0813">Transport</keyword>
<comment type="function">
    <text evidence="1">Component of the A-type ATP synthase that produces ATP from ADP in the presence of a proton gradient across the membrane. The A chain is the catalytic subunit.</text>
</comment>
<comment type="catalytic activity">
    <reaction evidence="1">
        <text>ATP + H2O + 4 H(+)(in) = ADP + phosphate + 5 H(+)(out)</text>
        <dbReference type="Rhea" id="RHEA:57720"/>
        <dbReference type="ChEBI" id="CHEBI:15377"/>
        <dbReference type="ChEBI" id="CHEBI:15378"/>
        <dbReference type="ChEBI" id="CHEBI:30616"/>
        <dbReference type="ChEBI" id="CHEBI:43474"/>
        <dbReference type="ChEBI" id="CHEBI:456216"/>
        <dbReference type="EC" id="7.1.2.2"/>
    </reaction>
</comment>
<comment type="subunit">
    <text evidence="1">Has multiple subunits with at least A(3), B(3), C, D, E, F, H, I and proteolipid K(x).</text>
</comment>
<comment type="subcellular location">
    <subcellularLocation>
        <location evidence="1">Cell membrane</location>
        <topology evidence="1">Peripheral membrane protein</topology>
    </subcellularLocation>
</comment>
<comment type="similarity">
    <text evidence="1">Belongs to the ATPase alpha/beta chains family.</text>
</comment>
<organism>
    <name type="scientific">Hyperthermus butylicus (strain DSM 5456 / JCM 9403 / PLM1-5)</name>
    <dbReference type="NCBI Taxonomy" id="415426"/>
    <lineage>
        <taxon>Archaea</taxon>
        <taxon>Thermoproteota</taxon>
        <taxon>Thermoprotei</taxon>
        <taxon>Desulfurococcales</taxon>
        <taxon>Pyrodictiaceae</taxon>
        <taxon>Hyperthermus</taxon>
    </lineage>
</organism>
<accession>A2BKX6</accession>